<comment type="function">
    <text>This is a receptor for the anterior pituitary hormone prolactin.</text>
</comment>
<comment type="subcellular location">
    <subcellularLocation>
        <location>Membrane</location>
        <topology>Single-pass type I membrane protein</topology>
    </subcellularLocation>
</comment>
<comment type="domain">
    <text>The WSXWS motif appears to be necessary for proper protein folding and thereby efficient intracellular transport and cell-surface receptor binding.</text>
</comment>
<comment type="domain">
    <text>The box 1 motif is required for JAK interaction and/or activation.</text>
</comment>
<comment type="similarity">
    <text evidence="5">Belongs to the type I cytokine receptor family. Type 1 subfamily.</text>
</comment>
<reference key="1">
    <citation type="journal article" date="1996" name="Biol. Reprod.">
        <title>Molecular cloning, tissue distribution, and expression of the prolactin receptor during various reproductive states in Meleagris gallopavo.</title>
        <authorList>
            <person name="Zhou J.F."/>
            <person name="Zadworny D."/>
            <person name="Guemene D."/>
            <person name="Kuhnlein U."/>
        </authorList>
    </citation>
    <scope>NUCLEOTIDE SEQUENCE [MRNA]</scope>
    <source>
        <tissue>Kidney</tissue>
    </source>
</reference>
<reference key="2">
    <citation type="submission" date="1995-03" db="EMBL/GenBank/DDBJ databases">
        <authorList>
            <person name="Pitts G.R."/>
            <person name="You S.K."/>
            <person name="Foster D.N."/>
            <person name="el Halawani M.E."/>
        </authorList>
    </citation>
    <scope>NUCLEOTIDE SEQUENCE [MRNA] OF 82-121 AND 473-522</scope>
    <source>
        <tissue>Ovary</tissue>
    </source>
</reference>
<name>PRLR_MELGA</name>
<feature type="signal peptide" evidence="2">
    <location>
        <begin position="1"/>
        <end position="23"/>
    </location>
</feature>
<feature type="chain" id="PRO_0000010986" description="Prolactin receptor">
    <location>
        <begin position="24"/>
        <end position="831"/>
    </location>
</feature>
<feature type="topological domain" description="Extracellular" evidence="2">
    <location>
        <begin position="24"/>
        <end position="438"/>
    </location>
</feature>
<feature type="transmembrane region" description="Helical" evidence="2">
    <location>
        <begin position="439"/>
        <end position="459"/>
    </location>
</feature>
<feature type="topological domain" description="Cytoplasmic" evidence="2">
    <location>
        <begin position="460"/>
        <end position="831"/>
    </location>
</feature>
<feature type="domain" description="Fibronectin type-III 1" evidence="3">
    <location>
        <begin position="30"/>
        <end position="128"/>
    </location>
</feature>
<feature type="domain" description="Fibronectin type-III 2" evidence="3">
    <location>
        <begin position="129"/>
        <end position="232"/>
    </location>
</feature>
<feature type="domain" description="Fibronectin type-III 3" evidence="3">
    <location>
        <begin position="233"/>
        <end position="331"/>
    </location>
</feature>
<feature type="domain" description="Fibronectin type-III 4" evidence="3">
    <location>
        <begin position="332"/>
        <end position="433"/>
    </location>
</feature>
<feature type="region of interest" description="Disordered" evidence="4">
    <location>
        <begin position="527"/>
        <end position="563"/>
    </location>
</feature>
<feature type="region of interest" description="Disordered" evidence="4">
    <location>
        <begin position="776"/>
        <end position="831"/>
    </location>
</feature>
<feature type="short sequence motif" description="WSXWS motif">
    <location>
        <begin position="419"/>
        <end position="423"/>
    </location>
</feature>
<feature type="short sequence motif" description="Box 1 motif">
    <location>
        <begin position="471"/>
        <end position="479"/>
    </location>
</feature>
<feature type="compositionally biased region" description="Basic and acidic residues" evidence="4">
    <location>
        <begin position="545"/>
        <end position="554"/>
    </location>
</feature>
<feature type="compositionally biased region" description="Polar residues" evidence="4">
    <location>
        <begin position="777"/>
        <end position="803"/>
    </location>
</feature>
<feature type="binding site" evidence="1">
    <location>
        <position position="414"/>
    </location>
    <ligand>
        <name>Zn(2+)</name>
        <dbReference type="ChEBI" id="CHEBI:29105"/>
    </ligand>
</feature>
<feature type="binding site" evidence="1">
    <location>
        <position position="416"/>
    </location>
    <ligand>
        <name>Zn(2+)</name>
        <dbReference type="ChEBI" id="CHEBI:29105"/>
    </ligand>
</feature>
<feature type="glycosylation site" description="N-linked (GlcNAc...) asparagine" evidence="2">
    <location>
        <position position="59"/>
    </location>
</feature>
<feature type="glycosylation site" description="N-linked (GlcNAc...) asparagine" evidence="2">
    <location>
        <position position="91"/>
    </location>
</feature>
<feature type="glycosylation site" description="N-linked (GlcNAc...) asparagine" evidence="2">
    <location>
        <position position="100"/>
    </location>
</feature>
<feature type="glycosylation site" description="N-linked (GlcNAc...) asparagine" evidence="2">
    <location>
        <position position="112"/>
    </location>
</feature>
<feature type="glycosylation site" description="N-linked (GlcNAc...) asparagine" evidence="2">
    <location>
        <position position="132"/>
    </location>
</feature>
<feature type="glycosylation site" description="N-linked (GlcNAc...) asparagine" evidence="2">
    <location>
        <position position="262"/>
    </location>
</feature>
<feature type="glycosylation site" description="N-linked (GlcNAc...) asparagine" evidence="2">
    <location>
        <position position="303"/>
    </location>
</feature>
<feature type="glycosylation site" description="N-linked (GlcNAc...) asparagine" evidence="2">
    <location>
        <position position="315"/>
    </location>
</feature>
<feature type="glycosylation site" description="N-linked (GlcNAc...) asparagine" evidence="2">
    <location>
        <position position="335"/>
    </location>
</feature>
<feature type="disulfide bond" evidence="1">
    <location>
        <begin position="36"/>
        <end position="46"/>
    </location>
</feature>
<feature type="disulfide bond" evidence="1">
    <location>
        <begin position="75"/>
        <end position="86"/>
    </location>
</feature>
<sequence>MKQNLISSVQIILLLPLTTVGLTSQSFPGKPKIIRCRSLEKETFSCWWKPGSDGGLPTNYTLFYSKDSEEKIYECPDYRTSGPNSCYFNRNYTNSWTTYNITVTATNEIGSNSSDPQYVDVTSIVQPGSPVNLTLETQRYANIMYLWAKWSPPLLADASSNHLYHYELRLKPEEKEEWETVPVGVQTQCKINRLNAGMRYVVQVRCMLDPGEWSEWSSERRILISGGLSPPEKPTITKCRSPEKETFTCWWKPGLDGGHPTNYTLLYSKEGEEQVYECPDYRTAGPNSCYFDKKHTSFWTVYNITVKATNEMGSNSSDPHYVDVTYIVQPDPPANVTLELKKPINRKPYLMLTWSPPPLADVRSGWLTLDYELRLKPEEGEEWETVFVGQQTQYKMFSLNPGKKYIVQIHCKPDHHGSWSEWSSENYIEIPNDFRVKDMIVWIVLGVLSSLICLIMSWTMVLKGYRMITFILPPVPGPKIKGIDTHLLETGKSEELLSALGCHGFPPTSDCEELLIEYLEVEDSEDHQLMPSHDSGRPSKNAKITLKETDRDSGRGSCDSPSLLSEKCRETCALPSALQIQDVRDVQAKKAGKRSWESYCVASERKALLFNNESAKSSTWPAVQLPNNQPPTFAYHSIVEANKITSTTTNMNVAAVLVENEERHQSLYSISETISGGMEKQEEMENLHSKTTQTTVQVRQNRSNEKLPFLNAALMDYVEVHKVRQDEEPTVLLKHKEKSGKIEKYTISGASKEYTKVSTVMNHNILVLMPDSRVLHTPTSQEEPAKETSQNPQQGQVETNMSYCMTAPRDCQREPSGSEYMDPSSFMPSFK</sequence>
<protein>
    <recommendedName>
        <fullName>Prolactin receptor</fullName>
        <shortName>PRL-R</shortName>
        <shortName>tPRLR</shortName>
    </recommendedName>
</protein>
<evidence type="ECO:0000250" key="1"/>
<evidence type="ECO:0000255" key="2"/>
<evidence type="ECO:0000255" key="3">
    <source>
        <dbReference type="PROSITE-ProRule" id="PRU00316"/>
    </source>
</evidence>
<evidence type="ECO:0000256" key="4">
    <source>
        <dbReference type="SAM" id="MobiDB-lite"/>
    </source>
</evidence>
<evidence type="ECO:0000305" key="5"/>
<gene>
    <name type="primary">PRLR</name>
</gene>
<keyword id="KW-1015">Disulfide bond</keyword>
<keyword id="KW-0325">Glycoprotein</keyword>
<keyword id="KW-0472">Membrane</keyword>
<keyword id="KW-0479">Metal-binding</keyword>
<keyword id="KW-0675">Receptor</keyword>
<keyword id="KW-1185">Reference proteome</keyword>
<keyword id="KW-0677">Repeat</keyword>
<keyword id="KW-0732">Signal</keyword>
<keyword id="KW-0812">Transmembrane</keyword>
<keyword id="KW-1133">Transmembrane helix</keyword>
<keyword id="KW-0862">Zinc</keyword>
<accession>Q91094</accession>
<accession>Q91091</accession>
<accession>Q91092</accession>
<dbReference type="EMBL" id="L76587">
    <property type="protein sequence ID" value="AAB01544.1"/>
    <property type="molecule type" value="mRNA"/>
</dbReference>
<dbReference type="EMBL" id="U22947">
    <property type="protein sequence ID" value="AAA75038.1"/>
    <property type="molecule type" value="mRNA"/>
</dbReference>
<dbReference type="EMBL" id="U22924">
    <property type="protein sequence ID" value="AAA75039.1"/>
    <property type="molecule type" value="mRNA"/>
</dbReference>
<dbReference type="RefSeq" id="NP_001290088.1">
    <property type="nucleotide sequence ID" value="NM_001303159.1"/>
</dbReference>
<dbReference type="SMR" id="Q91094"/>
<dbReference type="FunCoup" id="Q91094">
    <property type="interactions" value="6"/>
</dbReference>
<dbReference type="GlyCosmos" id="Q91094">
    <property type="glycosylation" value="9 sites, No reported glycans"/>
</dbReference>
<dbReference type="GeneID" id="100126248"/>
<dbReference type="KEGG" id="mgp:100126248"/>
<dbReference type="CTD" id="5618"/>
<dbReference type="InParanoid" id="Q91094"/>
<dbReference type="OrthoDB" id="8858139at2759"/>
<dbReference type="Proteomes" id="UP000001645">
    <property type="component" value="Unplaced"/>
</dbReference>
<dbReference type="GO" id="GO:0009897">
    <property type="term" value="C:external side of plasma membrane"/>
    <property type="evidence" value="ECO:0007669"/>
    <property type="project" value="TreeGrafter"/>
</dbReference>
<dbReference type="GO" id="GO:0005886">
    <property type="term" value="C:plasma membrane"/>
    <property type="evidence" value="ECO:0000250"/>
    <property type="project" value="AgBase"/>
</dbReference>
<dbReference type="GO" id="GO:0043235">
    <property type="term" value="C:receptor complex"/>
    <property type="evidence" value="ECO:0007669"/>
    <property type="project" value="TreeGrafter"/>
</dbReference>
<dbReference type="GO" id="GO:0019955">
    <property type="term" value="F:cytokine binding"/>
    <property type="evidence" value="ECO:0007669"/>
    <property type="project" value="TreeGrafter"/>
</dbReference>
<dbReference type="GO" id="GO:0046872">
    <property type="term" value="F:metal ion binding"/>
    <property type="evidence" value="ECO:0007669"/>
    <property type="project" value="UniProtKB-KW"/>
</dbReference>
<dbReference type="GO" id="GO:0017046">
    <property type="term" value="F:peptide hormone binding"/>
    <property type="evidence" value="ECO:0007669"/>
    <property type="project" value="TreeGrafter"/>
</dbReference>
<dbReference type="GO" id="GO:0004925">
    <property type="term" value="F:prolactin receptor activity"/>
    <property type="evidence" value="ECO:0007669"/>
    <property type="project" value="TreeGrafter"/>
</dbReference>
<dbReference type="GO" id="GO:0008284">
    <property type="term" value="P:positive regulation of cell population proliferation"/>
    <property type="evidence" value="ECO:0007669"/>
    <property type="project" value="TreeGrafter"/>
</dbReference>
<dbReference type="CDD" id="cd00063">
    <property type="entry name" value="FN3"/>
    <property type="match status" value="4"/>
</dbReference>
<dbReference type="FunFam" id="2.60.40.10:FF:000287">
    <property type="entry name" value="Prolactin receptor"/>
    <property type="match status" value="2"/>
</dbReference>
<dbReference type="FunFam" id="2.60.40.10:FF:000358">
    <property type="entry name" value="Prolactin receptor"/>
    <property type="match status" value="2"/>
</dbReference>
<dbReference type="Gene3D" id="2.60.40.10">
    <property type="entry name" value="Immunoglobulins"/>
    <property type="match status" value="4"/>
</dbReference>
<dbReference type="InterPro" id="IPR003961">
    <property type="entry name" value="FN3_dom"/>
</dbReference>
<dbReference type="InterPro" id="IPR036116">
    <property type="entry name" value="FN3_sf"/>
</dbReference>
<dbReference type="InterPro" id="IPR015152">
    <property type="entry name" value="Growth/epo_recpt_lig-bind"/>
</dbReference>
<dbReference type="InterPro" id="IPR013783">
    <property type="entry name" value="Ig-like_fold"/>
</dbReference>
<dbReference type="InterPro" id="IPR003528">
    <property type="entry name" value="Long_hematopoietin_rcpt_CS"/>
</dbReference>
<dbReference type="InterPro" id="IPR050379">
    <property type="entry name" value="Type-I_Cytokine_Rcpt"/>
</dbReference>
<dbReference type="PANTHER" id="PTHR23036">
    <property type="entry name" value="CYTOKINE RECEPTOR"/>
    <property type="match status" value="1"/>
</dbReference>
<dbReference type="PANTHER" id="PTHR23036:SF86">
    <property type="entry name" value="PROLACTIN RECEPTOR"/>
    <property type="match status" value="1"/>
</dbReference>
<dbReference type="Pfam" id="PF09067">
    <property type="entry name" value="EpoR_lig-bind"/>
    <property type="match status" value="2"/>
</dbReference>
<dbReference type="Pfam" id="PF00041">
    <property type="entry name" value="fn3"/>
    <property type="match status" value="2"/>
</dbReference>
<dbReference type="SMART" id="SM00060">
    <property type="entry name" value="FN3"/>
    <property type="match status" value="4"/>
</dbReference>
<dbReference type="SUPFAM" id="SSF49265">
    <property type="entry name" value="Fibronectin type III"/>
    <property type="match status" value="4"/>
</dbReference>
<dbReference type="PROSITE" id="PS50853">
    <property type="entry name" value="FN3"/>
    <property type="match status" value="4"/>
</dbReference>
<dbReference type="PROSITE" id="PS01352">
    <property type="entry name" value="HEMATOPO_REC_L_F1"/>
    <property type="match status" value="1"/>
</dbReference>
<organism>
    <name type="scientific">Meleagris gallopavo</name>
    <name type="common">Wild turkey</name>
    <dbReference type="NCBI Taxonomy" id="9103"/>
    <lineage>
        <taxon>Eukaryota</taxon>
        <taxon>Metazoa</taxon>
        <taxon>Chordata</taxon>
        <taxon>Craniata</taxon>
        <taxon>Vertebrata</taxon>
        <taxon>Euteleostomi</taxon>
        <taxon>Archelosauria</taxon>
        <taxon>Archosauria</taxon>
        <taxon>Dinosauria</taxon>
        <taxon>Saurischia</taxon>
        <taxon>Theropoda</taxon>
        <taxon>Coelurosauria</taxon>
        <taxon>Aves</taxon>
        <taxon>Neognathae</taxon>
        <taxon>Galloanserae</taxon>
        <taxon>Galliformes</taxon>
        <taxon>Phasianidae</taxon>
        <taxon>Meleagridinae</taxon>
        <taxon>Meleagris</taxon>
    </lineage>
</organism>
<proteinExistence type="evidence at transcript level"/>